<sequence length="80" mass="9436">MKEQKWIHEGLITESLPNGMFRVRLDNVDNEDLILGYVSGRIRRSFIRILPGXRVKIEVSRXDSTRGRIIYRLRNKDSNB</sequence>
<proteinExistence type="inferred from homology"/>
<evidence type="ECO:0000255" key="1">
    <source>
        <dbReference type="HAMAP-Rule" id="MF_00075"/>
    </source>
</evidence>
<geneLocation type="chloroplast"/>
<dbReference type="EMBL" id="AF347617">
    <property type="protein sequence ID" value="AAK38846.1"/>
    <property type="molecule type" value="Genomic_DNA"/>
</dbReference>
<dbReference type="GO" id="GO:0009507">
    <property type="term" value="C:chloroplast"/>
    <property type="evidence" value="ECO:0007669"/>
    <property type="project" value="UniProtKB-SubCell"/>
</dbReference>
<dbReference type="GO" id="GO:0005829">
    <property type="term" value="C:cytosol"/>
    <property type="evidence" value="ECO:0007669"/>
    <property type="project" value="TreeGrafter"/>
</dbReference>
<dbReference type="GO" id="GO:0043022">
    <property type="term" value="F:ribosome binding"/>
    <property type="evidence" value="ECO:0007669"/>
    <property type="project" value="UniProtKB-UniRule"/>
</dbReference>
<dbReference type="GO" id="GO:0019843">
    <property type="term" value="F:rRNA binding"/>
    <property type="evidence" value="ECO:0007669"/>
    <property type="project" value="UniProtKB-UniRule"/>
</dbReference>
<dbReference type="GO" id="GO:0003743">
    <property type="term" value="F:translation initiation factor activity"/>
    <property type="evidence" value="ECO:0007669"/>
    <property type="project" value="UniProtKB-UniRule"/>
</dbReference>
<dbReference type="FunFam" id="2.40.50.140:FF:000019">
    <property type="entry name" value="Translation initiation factor IF-1, chloroplastic"/>
    <property type="match status" value="1"/>
</dbReference>
<dbReference type="Gene3D" id="2.40.50.140">
    <property type="entry name" value="Nucleic acid-binding proteins"/>
    <property type="match status" value="1"/>
</dbReference>
<dbReference type="HAMAP" id="MF_00075">
    <property type="entry name" value="IF_1"/>
    <property type="match status" value="1"/>
</dbReference>
<dbReference type="InterPro" id="IPR012340">
    <property type="entry name" value="NA-bd_OB-fold"/>
</dbReference>
<dbReference type="InterPro" id="IPR006196">
    <property type="entry name" value="RNA-binding_domain_S1_IF1"/>
</dbReference>
<dbReference type="InterPro" id="IPR004368">
    <property type="entry name" value="TIF_IF1"/>
</dbReference>
<dbReference type="NCBIfam" id="TIGR00008">
    <property type="entry name" value="infA"/>
    <property type="match status" value="1"/>
</dbReference>
<dbReference type="PANTHER" id="PTHR33370">
    <property type="entry name" value="TRANSLATION INITIATION FACTOR IF-1, CHLOROPLASTIC"/>
    <property type="match status" value="1"/>
</dbReference>
<dbReference type="PANTHER" id="PTHR33370:SF1">
    <property type="entry name" value="TRANSLATION INITIATION FACTOR IF-1, CHLOROPLASTIC"/>
    <property type="match status" value="1"/>
</dbReference>
<dbReference type="Pfam" id="PF01176">
    <property type="entry name" value="eIF-1a"/>
    <property type="match status" value="1"/>
</dbReference>
<dbReference type="SUPFAM" id="SSF50249">
    <property type="entry name" value="Nucleic acid-binding proteins"/>
    <property type="match status" value="1"/>
</dbReference>
<dbReference type="PROSITE" id="PS50832">
    <property type="entry name" value="S1_IF1_TYPE"/>
    <property type="match status" value="1"/>
</dbReference>
<protein>
    <recommendedName>
        <fullName evidence="1">Translation initiation factor IF-1, chloroplastic</fullName>
    </recommendedName>
</protein>
<gene>
    <name evidence="1" type="primary">infA</name>
</gene>
<name>IF1C_ILLPA</name>
<comment type="function">
    <text evidence="1">One of the essential components for the initiation of protein synthesis. Stabilizes the binding of IF-2 and IF-3 on the 30S subunit to which N-formylmethionyl-tRNA(fMet) subsequently binds. Helps modulate mRNA selection, yielding the 30S pre-initiation complex (PIC). Upon addition of the 50S ribosomal subunit IF-1, IF-2 and IF-3 are released leaving the mature 70S translation initiation complex.</text>
</comment>
<comment type="subunit">
    <text evidence="1">Component of the 30S ribosomal translation pre-initiation complex which assembles on the 30S ribosome in the order IF-2 and IF-3, IF-1 and N-formylmethionyl-tRNA(fMet); mRNA recruitment can occur at any time during PIC assembly.</text>
</comment>
<comment type="subcellular location">
    <subcellularLocation>
        <location evidence="1">Plastid</location>
        <location evidence="1">Chloroplast</location>
    </subcellularLocation>
</comment>
<comment type="similarity">
    <text evidence="1">Belongs to the IF-1 family.</text>
</comment>
<keyword id="KW-0150">Chloroplast</keyword>
<keyword id="KW-0396">Initiation factor</keyword>
<keyword id="KW-0934">Plastid</keyword>
<keyword id="KW-0648">Protein biosynthesis</keyword>
<keyword id="KW-0694">RNA-binding</keyword>
<keyword id="KW-0699">rRNA-binding</keyword>
<feature type="chain" id="PRO_0000095933" description="Translation initiation factor IF-1, chloroplastic">
    <location>
        <begin position="1"/>
        <end position="80"/>
    </location>
</feature>
<feature type="domain" description="S1-like" evidence="1">
    <location>
        <begin position="1"/>
        <end position="74"/>
    </location>
</feature>
<organism>
    <name type="scientific">Illicium parviflorum</name>
    <name type="common">Yellow anise tree</name>
    <name type="synonym">Badianifera parviflora</name>
    <dbReference type="NCBI Taxonomy" id="13099"/>
    <lineage>
        <taxon>Eukaryota</taxon>
        <taxon>Viridiplantae</taxon>
        <taxon>Streptophyta</taxon>
        <taxon>Embryophyta</taxon>
        <taxon>Tracheophyta</taxon>
        <taxon>Spermatophyta</taxon>
        <taxon>Magnoliopsida</taxon>
        <taxon>Austrobaileyales</taxon>
        <taxon>Schisandraceae</taxon>
        <taxon>Illicium</taxon>
    </lineage>
</organism>
<reference key="1">
    <citation type="journal article" date="2001" name="Plant Cell">
        <title>Many parallel losses of infA from chloroplast DNA during angiosperm evolution with multiple independent transfers to the nucleus.</title>
        <authorList>
            <person name="Millen R.S."/>
            <person name="Olmstead R.G."/>
            <person name="Adams K.L."/>
            <person name="Palmer J.D."/>
            <person name="Lao N.T."/>
            <person name="Heggie L."/>
            <person name="Kavanagh T.A."/>
            <person name="Hibberd J.M."/>
            <person name="Gray J.C."/>
            <person name="Morden C.W."/>
            <person name="Calie P.J."/>
            <person name="Jermiin L.S."/>
            <person name="Wolfe K.H."/>
        </authorList>
    </citation>
    <scope>NUCLEOTIDE SEQUENCE [GENOMIC DNA]</scope>
</reference>
<accession>Q95GN7</accession>